<accession>O52705</accession>
<comment type="function">
    <text evidence="1">Forms part of the ribosomal stalk, playing a central role in the interaction of the ribosome with GTP-bound translation factors.</text>
</comment>
<comment type="subunit">
    <text evidence="1">Part of the 50S ribosomal subunit. Forms part of the ribosomal stalk which helps the ribosome interact with GTP-bound translation factors. Forms a heptameric L10(L12)2(L12)2(L12)2 complex, where L10 forms an elongated spine to which the L12 dimers bind in a sequential fashion.</text>
</comment>
<comment type="similarity">
    <text evidence="1">Belongs to the universal ribosomal protein uL10 family.</text>
</comment>
<protein>
    <recommendedName>
        <fullName evidence="1">Large ribosomal subunit protein uL10</fullName>
    </recommendedName>
    <alternativeName>
        <fullName evidence="3">50S ribosomal protein L10</fullName>
    </alternativeName>
    <alternativeName>
        <fullName evidence="1">Acidic ribosomal protein P0 homolog</fullName>
    </alternativeName>
</protein>
<gene>
    <name evidence="1" type="primary">rpl10</name>
    <name evidence="1" type="synonym">rplP0</name>
</gene>
<evidence type="ECO:0000255" key="1">
    <source>
        <dbReference type="HAMAP-Rule" id="MF_00280"/>
    </source>
</evidence>
<evidence type="ECO:0000256" key="2">
    <source>
        <dbReference type="SAM" id="MobiDB-lite"/>
    </source>
</evidence>
<evidence type="ECO:0000305" key="3"/>
<sequence length="338" mass="36505">MITAESEHKIAPWKIEEVNKLKELLKNGQIVALVDMMEVPARQLQEIRDKIRGTMTLKMSRNTLIERAIKEVAEETGNPEFAKLADYIDKGAAIITTDMNPFKLYKTLEESKSPAPIKGGAVAPCDIEVKAGSTGMPPGPFLGELKSVGIPAAIEKGKIGIKEDKVVAKAGEVVSHKLAVVLSALGIKPVTVGLNLLAAYEDGVIYTPDVLKIDEEEFVQKIQDAYSKAFNLSVNAAIPTAQTIETLLQKAFANARAVSIESAFLTEKTTDDILGKAYSQMLAVAREVGDDALDDELKEKLSTAVVETKAEVEEAKEEEKEEKKEEAAPAAAGLGLLF</sequence>
<keyword id="KW-0687">Ribonucleoprotein</keyword>
<keyword id="KW-0689">Ribosomal protein</keyword>
<keyword id="KW-0694">RNA-binding</keyword>
<keyword id="KW-0699">rRNA-binding</keyword>
<name>RL10_METTL</name>
<organism>
    <name type="scientific">Methanothermococcus thermolithotrophicus</name>
    <name type="common">Methanococcus thermolithotrophicus</name>
    <dbReference type="NCBI Taxonomy" id="2186"/>
    <lineage>
        <taxon>Archaea</taxon>
        <taxon>Methanobacteriati</taxon>
        <taxon>Methanobacteriota</taxon>
        <taxon>Methanomada group</taxon>
        <taxon>Methanococci</taxon>
        <taxon>Methanococcales</taxon>
        <taxon>Methanococcaceae</taxon>
        <taxon>Methanothermococcus</taxon>
    </lineage>
</organism>
<reference key="1">
    <citation type="submission" date="1998-01" db="EMBL/GenBank/DDBJ databases">
        <authorList>
            <person name="Linhart A."/>
            <person name="Piendl W."/>
        </authorList>
    </citation>
    <scope>NUCLEOTIDE SEQUENCE [GENOMIC DNA]</scope>
</reference>
<feature type="chain" id="PRO_0000154796" description="Large ribosomal subunit protein uL10">
    <location>
        <begin position="1"/>
        <end position="338"/>
    </location>
</feature>
<feature type="region of interest" description="Disordered" evidence="2">
    <location>
        <begin position="309"/>
        <end position="338"/>
    </location>
</feature>
<feature type="compositionally biased region" description="Basic and acidic residues" evidence="2">
    <location>
        <begin position="309"/>
        <end position="327"/>
    </location>
</feature>
<proteinExistence type="inferred from homology"/>
<dbReference type="EMBL" id="AF044919">
    <property type="protein sequence ID" value="AAC64511.1"/>
    <property type="molecule type" value="Genomic_DNA"/>
</dbReference>
<dbReference type="SMR" id="O52705"/>
<dbReference type="GO" id="GO:0022625">
    <property type="term" value="C:cytosolic large ribosomal subunit"/>
    <property type="evidence" value="ECO:0007669"/>
    <property type="project" value="TreeGrafter"/>
</dbReference>
<dbReference type="GO" id="GO:0070180">
    <property type="term" value="F:large ribosomal subunit rRNA binding"/>
    <property type="evidence" value="ECO:0007669"/>
    <property type="project" value="UniProtKB-UniRule"/>
</dbReference>
<dbReference type="GO" id="GO:0003735">
    <property type="term" value="F:structural constituent of ribosome"/>
    <property type="evidence" value="ECO:0007669"/>
    <property type="project" value="TreeGrafter"/>
</dbReference>
<dbReference type="GO" id="GO:0002181">
    <property type="term" value="P:cytoplasmic translation"/>
    <property type="evidence" value="ECO:0007669"/>
    <property type="project" value="TreeGrafter"/>
</dbReference>
<dbReference type="GO" id="GO:0000027">
    <property type="term" value="P:ribosomal large subunit assembly"/>
    <property type="evidence" value="ECO:0007669"/>
    <property type="project" value="TreeGrafter"/>
</dbReference>
<dbReference type="CDD" id="cd05795">
    <property type="entry name" value="Ribosomal_P0_L10e"/>
    <property type="match status" value="1"/>
</dbReference>
<dbReference type="FunFam" id="3.90.105.20:FF:000001">
    <property type="entry name" value="60S acidic ribosomal protein P0"/>
    <property type="match status" value="1"/>
</dbReference>
<dbReference type="Gene3D" id="3.30.70.1730">
    <property type="match status" value="1"/>
</dbReference>
<dbReference type="Gene3D" id="3.90.105.20">
    <property type="match status" value="1"/>
</dbReference>
<dbReference type="Gene3D" id="6.10.140.760">
    <property type="match status" value="1"/>
</dbReference>
<dbReference type="HAMAP" id="MF_00280">
    <property type="entry name" value="Ribosomal_uL10_arch"/>
    <property type="match status" value="1"/>
</dbReference>
<dbReference type="InterPro" id="IPR050323">
    <property type="entry name" value="Ribosomal_protein_uL10"/>
</dbReference>
<dbReference type="InterPro" id="IPR001790">
    <property type="entry name" value="Ribosomal_uL10"/>
</dbReference>
<dbReference type="InterPro" id="IPR040637">
    <property type="entry name" value="Ribosomal_uL10-like_insert"/>
</dbReference>
<dbReference type="InterPro" id="IPR043164">
    <property type="entry name" value="Ribosomal_uL10-like_insert_sf"/>
</dbReference>
<dbReference type="InterPro" id="IPR043141">
    <property type="entry name" value="Ribosomal_uL10-like_sf"/>
</dbReference>
<dbReference type="InterPro" id="IPR022909">
    <property type="entry name" value="Ribosomal_uL10_arc"/>
</dbReference>
<dbReference type="NCBIfam" id="NF003096">
    <property type="entry name" value="PRK04019.1-2"/>
    <property type="match status" value="1"/>
</dbReference>
<dbReference type="NCBIfam" id="NF003098">
    <property type="entry name" value="PRK04019.1-5"/>
    <property type="match status" value="1"/>
</dbReference>
<dbReference type="PANTHER" id="PTHR45699">
    <property type="entry name" value="60S ACIDIC RIBOSOMAL PROTEIN P0"/>
    <property type="match status" value="1"/>
</dbReference>
<dbReference type="PANTHER" id="PTHR45699:SF3">
    <property type="entry name" value="LARGE RIBOSOMAL SUBUNIT PROTEIN UL10"/>
    <property type="match status" value="1"/>
</dbReference>
<dbReference type="Pfam" id="PF00466">
    <property type="entry name" value="Ribosomal_L10"/>
    <property type="match status" value="1"/>
</dbReference>
<dbReference type="Pfam" id="PF17777">
    <property type="entry name" value="RL10P_insert"/>
    <property type="match status" value="1"/>
</dbReference>
<dbReference type="SUPFAM" id="SSF160369">
    <property type="entry name" value="Ribosomal protein L10-like"/>
    <property type="match status" value="1"/>
</dbReference>